<proteinExistence type="inferred from homology"/>
<gene>
    <name evidence="1" type="primary">atpH</name>
    <name type="ordered locus">SaurJH1_2180</name>
</gene>
<name>ATPD_STAA2</name>
<dbReference type="EMBL" id="CP000736">
    <property type="protein sequence ID" value="ABR53009.1"/>
    <property type="molecule type" value="Genomic_DNA"/>
</dbReference>
<dbReference type="SMR" id="A6U3J1"/>
<dbReference type="KEGG" id="sah:SaurJH1_2180"/>
<dbReference type="HOGENOM" id="CLU_085114_4_1_9"/>
<dbReference type="GO" id="GO:0005886">
    <property type="term" value="C:plasma membrane"/>
    <property type="evidence" value="ECO:0007669"/>
    <property type="project" value="UniProtKB-SubCell"/>
</dbReference>
<dbReference type="GO" id="GO:0045259">
    <property type="term" value="C:proton-transporting ATP synthase complex"/>
    <property type="evidence" value="ECO:0007669"/>
    <property type="project" value="UniProtKB-KW"/>
</dbReference>
<dbReference type="GO" id="GO:0046933">
    <property type="term" value="F:proton-transporting ATP synthase activity, rotational mechanism"/>
    <property type="evidence" value="ECO:0007669"/>
    <property type="project" value="UniProtKB-UniRule"/>
</dbReference>
<dbReference type="Gene3D" id="1.10.520.20">
    <property type="entry name" value="N-terminal domain of the delta subunit of the F1F0-ATP synthase"/>
    <property type="match status" value="1"/>
</dbReference>
<dbReference type="HAMAP" id="MF_01416">
    <property type="entry name" value="ATP_synth_delta_bact"/>
    <property type="match status" value="1"/>
</dbReference>
<dbReference type="InterPro" id="IPR026015">
    <property type="entry name" value="ATP_synth_OSCP/delta_N_sf"/>
</dbReference>
<dbReference type="InterPro" id="IPR020781">
    <property type="entry name" value="ATPase_OSCP/d_CS"/>
</dbReference>
<dbReference type="InterPro" id="IPR000711">
    <property type="entry name" value="ATPase_OSCP/dsu"/>
</dbReference>
<dbReference type="NCBIfam" id="TIGR01145">
    <property type="entry name" value="ATP_synt_delta"/>
    <property type="match status" value="1"/>
</dbReference>
<dbReference type="NCBIfam" id="NF004399">
    <property type="entry name" value="PRK05758.1-1"/>
    <property type="match status" value="1"/>
</dbReference>
<dbReference type="PANTHER" id="PTHR11910">
    <property type="entry name" value="ATP SYNTHASE DELTA CHAIN"/>
    <property type="match status" value="1"/>
</dbReference>
<dbReference type="Pfam" id="PF00213">
    <property type="entry name" value="OSCP"/>
    <property type="match status" value="1"/>
</dbReference>
<dbReference type="PRINTS" id="PR00125">
    <property type="entry name" value="ATPASEDELTA"/>
</dbReference>
<dbReference type="SUPFAM" id="SSF47928">
    <property type="entry name" value="N-terminal domain of the delta subunit of the F1F0-ATP synthase"/>
    <property type="match status" value="1"/>
</dbReference>
<dbReference type="PROSITE" id="PS00389">
    <property type="entry name" value="ATPASE_DELTA"/>
    <property type="match status" value="1"/>
</dbReference>
<accession>A6U3J1</accession>
<reference key="1">
    <citation type="submission" date="2007-06" db="EMBL/GenBank/DDBJ databases">
        <title>Complete sequence of chromosome of Staphylococcus aureus subsp. aureus JH1.</title>
        <authorList>
            <consortium name="US DOE Joint Genome Institute"/>
            <person name="Copeland A."/>
            <person name="Lucas S."/>
            <person name="Lapidus A."/>
            <person name="Barry K."/>
            <person name="Detter J.C."/>
            <person name="Glavina del Rio T."/>
            <person name="Hammon N."/>
            <person name="Israni S."/>
            <person name="Dalin E."/>
            <person name="Tice H."/>
            <person name="Pitluck S."/>
            <person name="Chain P."/>
            <person name="Malfatti S."/>
            <person name="Shin M."/>
            <person name="Vergez L."/>
            <person name="Schmutz J."/>
            <person name="Larimer F."/>
            <person name="Land M."/>
            <person name="Hauser L."/>
            <person name="Kyrpides N."/>
            <person name="Ivanova N."/>
            <person name="Tomasz A."/>
            <person name="Richardson P."/>
        </authorList>
    </citation>
    <scope>NUCLEOTIDE SEQUENCE [LARGE SCALE GENOMIC DNA]</scope>
    <source>
        <strain>JH1</strain>
    </source>
</reference>
<evidence type="ECO:0000255" key="1">
    <source>
        <dbReference type="HAMAP-Rule" id="MF_01416"/>
    </source>
</evidence>
<sequence>MVKVANKYAKALFDVSLDTNNLETINEELTVINEAVKDKIEQLKMVDSNPTQTAEQRRELINGVFTDINPYIKNMMYVLADNRHISLIADVFKAFQSLYNGHYNQDFATIESTYELSQEELDKIVKLVTQQTKLSKVIVDTKINPDLIGGFRVKVGTTVLDGSVRNDLVQLQRKFRRVN</sequence>
<keyword id="KW-0066">ATP synthesis</keyword>
<keyword id="KW-1003">Cell membrane</keyword>
<keyword id="KW-0139">CF(1)</keyword>
<keyword id="KW-0375">Hydrogen ion transport</keyword>
<keyword id="KW-0406">Ion transport</keyword>
<keyword id="KW-0472">Membrane</keyword>
<keyword id="KW-0813">Transport</keyword>
<organism>
    <name type="scientific">Staphylococcus aureus (strain JH1)</name>
    <dbReference type="NCBI Taxonomy" id="359787"/>
    <lineage>
        <taxon>Bacteria</taxon>
        <taxon>Bacillati</taxon>
        <taxon>Bacillota</taxon>
        <taxon>Bacilli</taxon>
        <taxon>Bacillales</taxon>
        <taxon>Staphylococcaceae</taxon>
        <taxon>Staphylococcus</taxon>
    </lineage>
</organism>
<protein>
    <recommendedName>
        <fullName evidence="1">ATP synthase subunit delta</fullName>
    </recommendedName>
    <alternativeName>
        <fullName evidence="1">ATP synthase F(1) sector subunit delta</fullName>
    </alternativeName>
    <alternativeName>
        <fullName evidence="1">F-type ATPase subunit delta</fullName>
        <shortName evidence="1">F-ATPase subunit delta</shortName>
    </alternativeName>
</protein>
<comment type="function">
    <text evidence="1">F(1)F(0) ATP synthase produces ATP from ADP in the presence of a proton or sodium gradient. F-type ATPases consist of two structural domains, F(1) containing the extramembraneous catalytic core and F(0) containing the membrane proton channel, linked together by a central stalk and a peripheral stalk. During catalysis, ATP synthesis in the catalytic domain of F(1) is coupled via a rotary mechanism of the central stalk subunits to proton translocation.</text>
</comment>
<comment type="function">
    <text evidence="1">This protein is part of the stalk that links CF(0) to CF(1). It either transmits conformational changes from CF(0) to CF(1) or is implicated in proton conduction.</text>
</comment>
<comment type="subunit">
    <text evidence="1">F-type ATPases have 2 components, F(1) - the catalytic core - and F(0) - the membrane proton channel. F(1) has five subunits: alpha(3), beta(3), gamma(1), delta(1), epsilon(1). F(0) has three main subunits: a(1), b(2) and c(10-14). The alpha and beta chains form an alternating ring which encloses part of the gamma chain. F(1) is attached to F(0) by a central stalk formed by the gamma and epsilon chains, while a peripheral stalk is formed by the delta and b chains.</text>
</comment>
<comment type="subcellular location">
    <subcellularLocation>
        <location evidence="1">Cell membrane</location>
        <topology evidence="1">Peripheral membrane protein</topology>
    </subcellularLocation>
</comment>
<comment type="similarity">
    <text evidence="1">Belongs to the ATPase delta chain family.</text>
</comment>
<feature type="chain" id="PRO_1000184797" description="ATP synthase subunit delta">
    <location>
        <begin position="1"/>
        <end position="179"/>
    </location>
</feature>